<gene>
    <name evidence="1" type="primary">gatB</name>
    <name type="ordered locus">Cgl1259</name>
    <name type="ordered locus">cg1420</name>
</gene>
<comment type="function">
    <text evidence="1">Allows the formation of correctly charged Asn-tRNA(Asn) or Gln-tRNA(Gln) through the transamidation of misacylated Asp-tRNA(Asn) or Glu-tRNA(Gln) in organisms which lack either or both of asparaginyl-tRNA or glutaminyl-tRNA synthetases. The reaction takes place in the presence of glutamine and ATP through an activated phospho-Asp-tRNA(Asn) or phospho-Glu-tRNA(Gln).</text>
</comment>
<comment type="catalytic activity">
    <reaction evidence="1">
        <text>L-glutamyl-tRNA(Gln) + L-glutamine + ATP + H2O = L-glutaminyl-tRNA(Gln) + L-glutamate + ADP + phosphate + H(+)</text>
        <dbReference type="Rhea" id="RHEA:17521"/>
        <dbReference type="Rhea" id="RHEA-COMP:9681"/>
        <dbReference type="Rhea" id="RHEA-COMP:9684"/>
        <dbReference type="ChEBI" id="CHEBI:15377"/>
        <dbReference type="ChEBI" id="CHEBI:15378"/>
        <dbReference type="ChEBI" id="CHEBI:29985"/>
        <dbReference type="ChEBI" id="CHEBI:30616"/>
        <dbReference type="ChEBI" id="CHEBI:43474"/>
        <dbReference type="ChEBI" id="CHEBI:58359"/>
        <dbReference type="ChEBI" id="CHEBI:78520"/>
        <dbReference type="ChEBI" id="CHEBI:78521"/>
        <dbReference type="ChEBI" id="CHEBI:456216"/>
    </reaction>
</comment>
<comment type="catalytic activity">
    <reaction evidence="1">
        <text>L-aspartyl-tRNA(Asn) + L-glutamine + ATP + H2O = L-asparaginyl-tRNA(Asn) + L-glutamate + ADP + phosphate + 2 H(+)</text>
        <dbReference type="Rhea" id="RHEA:14513"/>
        <dbReference type="Rhea" id="RHEA-COMP:9674"/>
        <dbReference type="Rhea" id="RHEA-COMP:9677"/>
        <dbReference type="ChEBI" id="CHEBI:15377"/>
        <dbReference type="ChEBI" id="CHEBI:15378"/>
        <dbReference type="ChEBI" id="CHEBI:29985"/>
        <dbReference type="ChEBI" id="CHEBI:30616"/>
        <dbReference type="ChEBI" id="CHEBI:43474"/>
        <dbReference type="ChEBI" id="CHEBI:58359"/>
        <dbReference type="ChEBI" id="CHEBI:78515"/>
        <dbReference type="ChEBI" id="CHEBI:78516"/>
        <dbReference type="ChEBI" id="CHEBI:456216"/>
    </reaction>
</comment>
<comment type="subunit">
    <text evidence="1">Heterotrimer of A, B and C subunits.</text>
</comment>
<comment type="similarity">
    <text evidence="1">Belongs to the GatB/GatE family. GatB subfamily.</text>
</comment>
<comment type="sequence caution" evidence="3">
    <conflict type="erroneous initiation">
        <sequence resource="EMBL-CDS" id="CAF19962"/>
    </conflict>
</comment>
<accession>Q8NR05</accession>
<dbReference type="EC" id="6.3.5.-" evidence="1"/>
<dbReference type="EMBL" id="BA000036">
    <property type="protein sequence ID" value="BAB98652.1"/>
    <property type="molecule type" value="Genomic_DNA"/>
</dbReference>
<dbReference type="EMBL" id="BX927151">
    <property type="protein sequence ID" value="CAF19962.1"/>
    <property type="status" value="ALT_INIT"/>
    <property type="molecule type" value="Genomic_DNA"/>
</dbReference>
<dbReference type="RefSeq" id="NP_600482.1">
    <property type="nucleotide sequence ID" value="NC_003450.3"/>
</dbReference>
<dbReference type="SMR" id="Q8NR05"/>
<dbReference type="STRING" id="196627.cg1420"/>
<dbReference type="KEGG" id="cgb:cg1420"/>
<dbReference type="KEGG" id="cgl:Cgl1259"/>
<dbReference type="PATRIC" id="fig|196627.13.peg.1236"/>
<dbReference type="eggNOG" id="COG0064">
    <property type="taxonomic scope" value="Bacteria"/>
</dbReference>
<dbReference type="HOGENOM" id="CLU_019240_0_0_11"/>
<dbReference type="OrthoDB" id="9804078at2"/>
<dbReference type="BioCyc" id="CORYNE:G18NG-10832-MONOMER"/>
<dbReference type="Proteomes" id="UP000000582">
    <property type="component" value="Chromosome"/>
</dbReference>
<dbReference type="Proteomes" id="UP000001009">
    <property type="component" value="Chromosome"/>
</dbReference>
<dbReference type="GO" id="GO:0050566">
    <property type="term" value="F:asparaginyl-tRNA synthase (glutamine-hydrolyzing) activity"/>
    <property type="evidence" value="ECO:0007669"/>
    <property type="project" value="RHEA"/>
</dbReference>
<dbReference type="GO" id="GO:0005524">
    <property type="term" value="F:ATP binding"/>
    <property type="evidence" value="ECO:0007669"/>
    <property type="project" value="UniProtKB-KW"/>
</dbReference>
<dbReference type="GO" id="GO:0050567">
    <property type="term" value="F:glutaminyl-tRNA synthase (glutamine-hydrolyzing) activity"/>
    <property type="evidence" value="ECO:0007669"/>
    <property type="project" value="UniProtKB-UniRule"/>
</dbReference>
<dbReference type="GO" id="GO:0070681">
    <property type="term" value="P:glutaminyl-tRNAGln biosynthesis via transamidation"/>
    <property type="evidence" value="ECO:0007669"/>
    <property type="project" value="TreeGrafter"/>
</dbReference>
<dbReference type="GO" id="GO:0006412">
    <property type="term" value="P:translation"/>
    <property type="evidence" value="ECO:0007669"/>
    <property type="project" value="UniProtKB-UniRule"/>
</dbReference>
<dbReference type="FunFam" id="1.10.10.410:FF:000001">
    <property type="entry name" value="Aspartyl/glutamyl-tRNA(Asn/Gln) amidotransferase subunit B"/>
    <property type="match status" value="1"/>
</dbReference>
<dbReference type="Gene3D" id="1.10.10.410">
    <property type="match status" value="1"/>
</dbReference>
<dbReference type="HAMAP" id="MF_00121">
    <property type="entry name" value="GatB"/>
    <property type="match status" value="1"/>
</dbReference>
<dbReference type="InterPro" id="IPR017959">
    <property type="entry name" value="Asn/Gln-tRNA_amidoTrfase_suB/E"/>
</dbReference>
<dbReference type="InterPro" id="IPR006075">
    <property type="entry name" value="Asn/Gln-tRNA_Trfase_suB/E_cat"/>
</dbReference>
<dbReference type="InterPro" id="IPR018027">
    <property type="entry name" value="Asn/Gln_amidotransferase"/>
</dbReference>
<dbReference type="InterPro" id="IPR003789">
    <property type="entry name" value="Asn/Gln_tRNA_amidoTrase-B-like"/>
</dbReference>
<dbReference type="InterPro" id="IPR004413">
    <property type="entry name" value="GatB"/>
</dbReference>
<dbReference type="InterPro" id="IPR023168">
    <property type="entry name" value="GatB_Yqey_C_2"/>
</dbReference>
<dbReference type="InterPro" id="IPR017958">
    <property type="entry name" value="Gln-tRNA_amidoTrfase_suB_CS"/>
</dbReference>
<dbReference type="InterPro" id="IPR014746">
    <property type="entry name" value="Gln_synth/guanido_kin_cat_dom"/>
</dbReference>
<dbReference type="NCBIfam" id="TIGR00133">
    <property type="entry name" value="gatB"/>
    <property type="match status" value="1"/>
</dbReference>
<dbReference type="NCBIfam" id="NF004012">
    <property type="entry name" value="PRK05477.1-2"/>
    <property type="match status" value="1"/>
</dbReference>
<dbReference type="NCBIfam" id="NF004013">
    <property type="entry name" value="PRK05477.1-3"/>
    <property type="match status" value="1"/>
</dbReference>
<dbReference type="NCBIfam" id="NF004014">
    <property type="entry name" value="PRK05477.1-4"/>
    <property type="match status" value="1"/>
</dbReference>
<dbReference type="PANTHER" id="PTHR11659">
    <property type="entry name" value="GLUTAMYL-TRNA GLN AMIDOTRANSFERASE SUBUNIT B MITOCHONDRIAL AND PROKARYOTIC PET112-RELATED"/>
    <property type="match status" value="1"/>
</dbReference>
<dbReference type="PANTHER" id="PTHR11659:SF0">
    <property type="entry name" value="GLUTAMYL-TRNA(GLN) AMIDOTRANSFERASE SUBUNIT B, MITOCHONDRIAL"/>
    <property type="match status" value="1"/>
</dbReference>
<dbReference type="Pfam" id="PF02934">
    <property type="entry name" value="GatB_N"/>
    <property type="match status" value="1"/>
</dbReference>
<dbReference type="Pfam" id="PF02637">
    <property type="entry name" value="GatB_Yqey"/>
    <property type="match status" value="1"/>
</dbReference>
<dbReference type="SMART" id="SM00845">
    <property type="entry name" value="GatB_Yqey"/>
    <property type="match status" value="1"/>
</dbReference>
<dbReference type="SUPFAM" id="SSF89095">
    <property type="entry name" value="GatB/YqeY motif"/>
    <property type="match status" value="1"/>
</dbReference>
<dbReference type="SUPFAM" id="SSF55931">
    <property type="entry name" value="Glutamine synthetase/guanido kinase"/>
    <property type="match status" value="1"/>
</dbReference>
<dbReference type="PROSITE" id="PS01234">
    <property type="entry name" value="GATB"/>
    <property type="match status" value="1"/>
</dbReference>
<feature type="chain" id="PRO_0000148786" description="Aspartyl/glutamyl-tRNA(Asn/Gln) amidotransferase subunit B">
    <location>
        <begin position="1"/>
        <end position="493"/>
    </location>
</feature>
<feature type="region of interest" description="Disordered" evidence="2">
    <location>
        <begin position="268"/>
        <end position="291"/>
    </location>
</feature>
<feature type="compositionally biased region" description="Basic and acidic residues" evidence="2">
    <location>
        <begin position="280"/>
        <end position="291"/>
    </location>
</feature>
<organism>
    <name type="scientific">Corynebacterium glutamicum (strain ATCC 13032 / DSM 20300 / JCM 1318 / BCRC 11384 / CCUG 27702 / LMG 3730 / NBRC 12168 / NCIMB 10025 / NRRL B-2784 / 534)</name>
    <dbReference type="NCBI Taxonomy" id="196627"/>
    <lineage>
        <taxon>Bacteria</taxon>
        <taxon>Bacillati</taxon>
        <taxon>Actinomycetota</taxon>
        <taxon>Actinomycetes</taxon>
        <taxon>Mycobacteriales</taxon>
        <taxon>Corynebacteriaceae</taxon>
        <taxon>Corynebacterium</taxon>
    </lineage>
</organism>
<sequence length="493" mass="53552">MDFDEVLEKYDPVMGLEVHVELGTETKMFSASSAHFGAEPNSNVDPVSLGLPGALPVVNAKGVEWAIKIGLALNCSIAESSRFARKNYFYPDQPKNYQISQYDEPIAYDGYLDVVLEDGTEWRVEIERAHMEEDTGKLTHLGGTSGRIHGATASLVDCNRAGVPLIEVVTKPIEGAGARAPEIAKAYVSALRDLVKALGVSDGRLDQGSMRVDANLSLRPIGQEEFGTRTETKNINSLKSVEQAITFEMQRQAQVLDDGGVIDQETRHYQEADGSTSKGRPKETAEDYRYFNDPDLPPVIAPREWVEEIRATLPELPWVRRARIQEEWKLSDAEMRDLINANALDLIIETVEAGTTPDEARAWWVSYISQKANESGVELDALGVAPAHVARVVALVSEGKLTNKLARQAIDGVIAGEGDVDAVVAARGLEVVRDDGAIEKAVDDALAANPDIVEKYRAGNTKVTGAIVGAVMKATRGKADPAQVNQLIAKKLA</sequence>
<name>GATB_CORGL</name>
<proteinExistence type="inferred from homology"/>
<protein>
    <recommendedName>
        <fullName evidence="1">Aspartyl/glutamyl-tRNA(Asn/Gln) amidotransferase subunit B</fullName>
        <shortName evidence="1">Asp/Glu-ADT subunit B</shortName>
        <ecNumber evidence="1">6.3.5.-</ecNumber>
    </recommendedName>
</protein>
<evidence type="ECO:0000255" key="1">
    <source>
        <dbReference type="HAMAP-Rule" id="MF_00121"/>
    </source>
</evidence>
<evidence type="ECO:0000256" key="2">
    <source>
        <dbReference type="SAM" id="MobiDB-lite"/>
    </source>
</evidence>
<evidence type="ECO:0000305" key="3"/>
<reference key="1">
    <citation type="journal article" date="2003" name="Appl. Microbiol. Biotechnol.">
        <title>The Corynebacterium glutamicum genome: features and impacts on biotechnological processes.</title>
        <authorList>
            <person name="Ikeda M."/>
            <person name="Nakagawa S."/>
        </authorList>
    </citation>
    <scope>NUCLEOTIDE SEQUENCE [LARGE SCALE GENOMIC DNA]</scope>
    <source>
        <strain>ATCC 13032 / DSM 20300 / JCM 1318 / BCRC 11384 / CCUG 27702 / LMG 3730 / NBRC 12168 / NCIMB 10025 / NRRL B-2784 / 534</strain>
    </source>
</reference>
<reference key="2">
    <citation type="journal article" date="2003" name="J. Biotechnol.">
        <title>The complete Corynebacterium glutamicum ATCC 13032 genome sequence and its impact on the production of L-aspartate-derived amino acids and vitamins.</title>
        <authorList>
            <person name="Kalinowski J."/>
            <person name="Bathe B."/>
            <person name="Bartels D."/>
            <person name="Bischoff N."/>
            <person name="Bott M."/>
            <person name="Burkovski A."/>
            <person name="Dusch N."/>
            <person name="Eggeling L."/>
            <person name="Eikmanns B.J."/>
            <person name="Gaigalat L."/>
            <person name="Goesmann A."/>
            <person name="Hartmann M."/>
            <person name="Huthmacher K."/>
            <person name="Kraemer R."/>
            <person name="Linke B."/>
            <person name="McHardy A.C."/>
            <person name="Meyer F."/>
            <person name="Moeckel B."/>
            <person name="Pfefferle W."/>
            <person name="Puehler A."/>
            <person name="Rey D.A."/>
            <person name="Rueckert C."/>
            <person name="Rupp O."/>
            <person name="Sahm H."/>
            <person name="Wendisch V.F."/>
            <person name="Wiegraebe I."/>
            <person name="Tauch A."/>
        </authorList>
    </citation>
    <scope>NUCLEOTIDE SEQUENCE [LARGE SCALE GENOMIC DNA]</scope>
    <source>
        <strain>ATCC 13032 / DSM 20300 / JCM 1318 / BCRC 11384 / CCUG 27702 / LMG 3730 / NBRC 12168 / NCIMB 10025 / NRRL B-2784 / 534</strain>
    </source>
</reference>
<keyword id="KW-0067">ATP-binding</keyword>
<keyword id="KW-0436">Ligase</keyword>
<keyword id="KW-0547">Nucleotide-binding</keyword>
<keyword id="KW-0648">Protein biosynthesis</keyword>
<keyword id="KW-1185">Reference proteome</keyword>